<accession>A5GTE9</accession>
<keyword id="KW-0113">Calvin cycle</keyword>
<keyword id="KW-0119">Carbohydrate metabolism</keyword>
<keyword id="KW-0378">Hydrolase</keyword>
<keyword id="KW-0464">Manganese</keyword>
<keyword id="KW-0479">Metal-binding</keyword>
<keyword id="KW-1185">Reference proteome</keyword>
<organism>
    <name type="scientific">Synechococcus sp. (strain RCC307)</name>
    <dbReference type="NCBI Taxonomy" id="316278"/>
    <lineage>
        <taxon>Bacteria</taxon>
        <taxon>Bacillati</taxon>
        <taxon>Cyanobacteriota</taxon>
        <taxon>Cyanophyceae</taxon>
        <taxon>Synechococcales</taxon>
        <taxon>Synechococcaceae</taxon>
        <taxon>Synechococcus</taxon>
    </lineage>
</organism>
<protein>
    <recommendedName>
        <fullName>D-fructose 1,6-bisphosphatase class 2/sedoheptulose 1,7-bisphosphatase</fullName>
        <shortName>FBPase class 2/SBPase</shortName>
        <ecNumber>3.1.3.11</ecNumber>
        <ecNumber>3.1.3.37</ecNumber>
    </recommendedName>
</protein>
<dbReference type="EC" id="3.1.3.11"/>
<dbReference type="EC" id="3.1.3.37"/>
<dbReference type="EMBL" id="CT978603">
    <property type="protein sequence ID" value="CAK28158.1"/>
    <property type="molecule type" value="Genomic_DNA"/>
</dbReference>
<dbReference type="SMR" id="A5GTE9"/>
<dbReference type="STRING" id="316278.SynRCC307_1255"/>
<dbReference type="KEGG" id="syr:SynRCC307_1255"/>
<dbReference type="eggNOG" id="COG1494">
    <property type="taxonomic scope" value="Bacteria"/>
</dbReference>
<dbReference type="HOGENOM" id="CLU_054938_0_0_3"/>
<dbReference type="OrthoDB" id="9779353at2"/>
<dbReference type="UniPathway" id="UPA00116"/>
<dbReference type="Proteomes" id="UP000001115">
    <property type="component" value="Chromosome"/>
</dbReference>
<dbReference type="GO" id="GO:0005829">
    <property type="term" value="C:cytosol"/>
    <property type="evidence" value="ECO:0007669"/>
    <property type="project" value="TreeGrafter"/>
</dbReference>
<dbReference type="GO" id="GO:0042132">
    <property type="term" value="F:fructose 1,6-bisphosphate 1-phosphatase activity"/>
    <property type="evidence" value="ECO:0007669"/>
    <property type="project" value="UniProtKB-EC"/>
</dbReference>
<dbReference type="GO" id="GO:0046872">
    <property type="term" value="F:metal ion binding"/>
    <property type="evidence" value="ECO:0007669"/>
    <property type="project" value="UniProtKB-KW"/>
</dbReference>
<dbReference type="GO" id="GO:0050278">
    <property type="term" value="F:sedoheptulose-bisphosphatase activity"/>
    <property type="evidence" value="ECO:0007669"/>
    <property type="project" value="UniProtKB-EC"/>
</dbReference>
<dbReference type="GO" id="GO:0030388">
    <property type="term" value="P:fructose 1,6-bisphosphate metabolic process"/>
    <property type="evidence" value="ECO:0007669"/>
    <property type="project" value="TreeGrafter"/>
</dbReference>
<dbReference type="GO" id="GO:0006094">
    <property type="term" value="P:gluconeogenesis"/>
    <property type="evidence" value="ECO:0007669"/>
    <property type="project" value="InterPro"/>
</dbReference>
<dbReference type="GO" id="GO:0006071">
    <property type="term" value="P:glycerol metabolic process"/>
    <property type="evidence" value="ECO:0007669"/>
    <property type="project" value="InterPro"/>
</dbReference>
<dbReference type="GO" id="GO:0019253">
    <property type="term" value="P:reductive pentose-phosphate cycle"/>
    <property type="evidence" value="ECO:0007669"/>
    <property type="project" value="UniProtKB-UniPathway"/>
</dbReference>
<dbReference type="CDD" id="cd01516">
    <property type="entry name" value="FBPase_glpX"/>
    <property type="match status" value="1"/>
</dbReference>
<dbReference type="FunFam" id="3.40.190.90:FF:000001">
    <property type="entry name" value="Fructose-1,6-bisphosphatase"/>
    <property type="match status" value="1"/>
</dbReference>
<dbReference type="Gene3D" id="3.40.190.90">
    <property type="match status" value="1"/>
</dbReference>
<dbReference type="Gene3D" id="3.30.540.10">
    <property type="entry name" value="Fructose-1,6-Bisphosphatase, subunit A, domain 1"/>
    <property type="match status" value="1"/>
</dbReference>
<dbReference type="InterPro" id="IPR004464">
    <property type="entry name" value="FBPase_class-2/SBPase"/>
</dbReference>
<dbReference type="NCBIfam" id="TIGR00330">
    <property type="entry name" value="glpX"/>
    <property type="match status" value="1"/>
</dbReference>
<dbReference type="PANTHER" id="PTHR30447:SF0">
    <property type="entry name" value="FRUCTOSE-1,6-BISPHOSPHATASE 1 CLASS 2-RELATED"/>
    <property type="match status" value="1"/>
</dbReference>
<dbReference type="PANTHER" id="PTHR30447">
    <property type="entry name" value="FRUCTOSE-1,6-BISPHOSPHATASE CLASS 2"/>
    <property type="match status" value="1"/>
</dbReference>
<dbReference type="Pfam" id="PF03320">
    <property type="entry name" value="FBPase_glpX"/>
    <property type="match status" value="1"/>
</dbReference>
<dbReference type="PIRSF" id="PIRSF004532">
    <property type="entry name" value="GlpX"/>
    <property type="match status" value="1"/>
</dbReference>
<dbReference type="SUPFAM" id="SSF56655">
    <property type="entry name" value="Carbohydrate phosphatase"/>
    <property type="match status" value="1"/>
</dbReference>
<name>FBSB_SYNR3</name>
<comment type="function">
    <text evidence="1">Catalyzes the hydrolysis of fructose 1,6-bisphosphate (Fru 1,6-P2) and sedoheptulose 1,7-bisphosphate (Sed 1,7-P2) to fructose 6-phosphate and sedoheptulose 7-phosphate, respectively.</text>
</comment>
<comment type="catalytic activity">
    <reaction>
        <text>beta-D-fructose 1,6-bisphosphate + H2O = beta-D-fructose 6-phosphate + phosphate</text>
        <dbReference type="Rhea" id="RHEA:11064"/>
        <dbReference type="ChEBI" id="CHEBI:15377"/>
        <dbReference type="ChEBI" id="CHEBI:32966"/>
        <dbReference type="ChEBI" id="CHEBI:43474"/>
        <dbReference type="ChEBI" id="CHEBI:57634"/>
        <dbReference type="EC" id="3.1.3.11"/>
    </reaction>
</comment>
<comment type="catalytic activity">
    <reaction>
        <text>D-sedoheptulose 1,7-bisphosphate + H2O = D-sedoheptulose 7-phosphate + phosphate</text>
        <dbReference type="Rhea" id="RHEA:17461"/>
        <dbReference type="ChEBI" id="CHEBI:15377"/>
        <dbReference type="ChEBI" id="CHEBI:43474"/>
        <dbReference type="ChEBI" id="CHEBI:57483"/>
        <dbReference type="ChEBI" id="CHEBI:58335"/>
        <dbReference type="EC" id="3.1.3.37"/>
    </reaction>
</comment>
<comment type="cofactor">
    <cofactor evidence="1">
        <name>Mn(2+)</name>
        <dbReference type="ChEBI" id="CHEBI:29035"/>
    </cofactor>
</comment>
<comment type="pathway">
    <text>Carbohydrate biosynthesis; Calvin cycle.</text>
</comment>
<comment type="subunit">
    <text evidence="1">Homotetramer.</text>
</comment>
<comment type="similarity">
    <text evidence="2">Belongs to the FBPase class 2 family.</text>
</comment>
<gene>
    <name type="ordered locus">SynRCC307_1255</name>
</gene>
<reference key="1">
    <citation type="submission" date="2006-05" db="EMBL/GenBank/DDBJ databases">
        <authorList>
            <consortium name="Genoscope"/>
        </authorList>
    </citation>
    <scope>NUCLEOTIDE SEQUENCE [LARGE SCALE GENOMIC DNA]</scope>
    <source>
        <strain>RCC307</strain>
    </source>
</reference>
<feature type="chain" id="PRO_0000342733" description="D-fructose 1,6-bisphosphatase class 2/sedoheptulose 1,7-bisphosphatase">
    <location>
        <begin position="1"/>
        <end position="334"/>
    </location>
</feature>
<feature type="binding site" evidence="1">
    <location>
        <position position="33"/>
    </location>
    <ligand>
        <name>Mn(2+)</name>
        <dbReference type="ChEBI" id="CHEBI:29035"/>
        <label>1</label>
    </ligand>
</feature>
<feature type="binding site" evidence="1">
    <location>
        <position position="57"/>
    </location>
    <ligand>
        <name>Mn(2+)</name>
        <dbReference type="ChEBI" id="CHEBI:29035"/>
        <label>1</label>
    </ligand>
</feature>
<feature type="binding site" evidence="1">
    <location>
        <position position="85"/>
    </location>
    <ligand>
        <name>Mn(2+)</name>
        <dbReference type="ChEBI" id="CHEBI:29035"/>
        <label>2</label>
    </ligand>
</feature>
<feature type="binding site" evidence="1">
    <location>
        <begin position="88"/>
        <end position="90"/>
    </location>
    <ligand>
        <name>substrate</name>
    </ligand>
</feature>
<feature type="binding site" evidence="1">
    <location>
        <position position="88"/>
    </location>
    <ligand>
        <name>Mn(2+)</name>
        <dbReference type="ChEBI" id="CHEBI:29035"/>
        <label>2</label>
    </ligand>
</feature>
<feature type="binding site" evidence="1">
    <location>
        <position position="119"/>
    </location>
    <ligand>
        <name>substrate</name>
    </ligand>
</feature>
<feature type="binding site" evidence="1">
    <location>
        <begin position="164"/>
        <end position="166"/>
    </location>
    <ligand>
        <name>substrate</name>
    </ligand>
</feature>
<feature type="binding site" evidence="1">
    <location>
        <begin position="186"/>
        <end position="188"/>
    </location>
    <ligand>
        <name>substrate</name>
    </ligand>
</feature>
<feature type="binding site" evidence="1">
    <location>
        <position position="213"/>
    </location>
    <ligand>
        <name>Mn(2+)</name>
        <dbReference type="ChEBI" id="CHEBI:29035"/>
        <label>2</label>
    </ligand>
</feature>
<sequence>MDRTLIQEILEVVEQAAIASAKLTGCGLKNEADAAAVEAMRDRMGKINMRGRIVIGEGERDEAPMLYIGEEVGSGTGPGVDFAVDPCEGTNLCANSQRGSMAVLAASETGGLFNAPDFYMKKLAAPPAAKGKVDINKSATENINILSECLGIAVSDLVIVVMDRARHKDLIAEIRATGARVQPISDGDVQAAIACGFAGTGTHCLMGIGAAPEGVISAAALRALGGHFQGQLVYDPAVAQTKEWEGLTREGNLARLAEMGISDPDKVYEANELASGENVVFAGSGITDGLLFGGVKFESDCVRTSSLVISTLDNSARFTDTVHIKPGAQSIALR</sequence>
<proteinExistence type="inferred from homology"/>
<evidence type="ECO:0000250" key="1"/>
<evidence type="ECO:0000305" key="2"/>